<feature type="chain" id="PRO_0000257366" description="Ribosomal RNA small subunit methyltransferase A">
    <location>
        <begin position="1"/>
        <end position="274"/>
    </location>
</feature>
<feature type="binding site" evidence="1">
    <location>
        <position position="15"/>
    </location>
    <ligand>
        <name>S-adenosyl-L-methionine</name>
        <dbReference type="ChEBI" id="CHEBI:59789"/>
    </ligand>
</feature>
<feature type="binding site" evidence="1">
    <location>
        <position position="17"/>
    </location>
    <ligand>
        <name>S-adenosyl-L-methionine</name>
        <dbReference type="ChEBI" id="CHEBI:59789"/>
    </ligand>
</feature>
<feature type="binding site" evidence="1">
    <location>
        <position position="42"/>
    </location>
    <ligand>
        <name>S-adenosyl-L-methionine</name>
        <dbReference type="ChEBI" id="CHEBI:59789"/>
    </ligand>
</feature>
<feature type="binding site" evidence="1">
    <location>
        <position position="64"/>
    </location>
    <ligand>
        <name>S-adenosyl-L-methionine</name>
        <dbReference type="ChEBI" id="CHEBI:59789"/>
    </ligand>
</feature>
<feature type="binding site" evidence="1">
    <location>
        <position position="89"/>
    </location>
    <ligand>
        <name>S-adenosyl-L-methionine</name>
        <dbReference type="ChEBI" id="CHEBI:59789"/>
    </ligand>
</feature>
<feature type="binding site" evidence="1">
    <location>
        <position position="109"/>
    </location>
    <ligand>
        <name>S-adenosyl-L-methionine</name>
        <dbReference type="ChEBI" id="CHEBI:59789"/>
    </ligand>
</feature>
<comment type="function">
    <text evidence="1">Specifically dimethylates two adjacent adenosines (A1518 and A1519) in the loop of a conserved hairpin near the 3'-end of 16S rRNA in the 30S particle. May play a critical role in biogenesis of 30S subunits.</text>
</comment>
<comment type="catalytic activity">
    <reaction evidence="1">
        <text>adenosine(1518)/adenosine(1519) in 16S rRNA + 4 S-adenosyl-L-methionine = N(6)-dimethyladenosine(1518)/N(6)-dimethyladenosine(1519) in 16S rRNA + 4 S-adenosyl-L-homocysteine + 4 H(+)</text>
        <dbReference type="Rhea" id="RHEA:19609"/>
        <dbReference type="Rhea" id="RHEA-COMP:10232"/>
        <dbReference type="Rhea" id="RHEA-COMP:10233"/>
        <dbReference type="ChEBI" id="CHEBI:15378"/>
        <dbReference type="ChEBI" id="CHEBI:57856"/>
        <dbReference type="ChEBI" id="CHEBI:59789"/>
        <dbReference type="ChEBI" id="CHEBI:74411"/>
        <dbReference type="ChEBI" id="CHEBI:74493"/>
        <dbReference type="EC" id="2.1.1.182"/>
    </reaction>
</comment>
<comment type="subcellular location">
    <subcellularLocation>
        <location evidence="1">Cytoplasm</location>
    </subcellularLocation>
</comment>
<comment type="similarity">
    <text evidence="1">Belongs to the class I-like SAM-binding methyltransferase superfamily. rRNA adenine N(6)-methyltransferase family. RsmA subfamily.</text>
</comment>
<accession>Q3AXF3</accession>
<protein>
    <recommendedName>
        <fullName evidence="1">Ribosomal RNA small subunit methyltransferase A</fullName>
        <ecNumber evidence="1">2.1.1.182</ecNumber>
    </recommendedName>
    <alternativeName>
        <fullName evidence="1">16S rRNA (adenine(1518)-N(6)/adenine(1519)-N(6))-dimethyltransferase</fullName>
    </alternativeName>
    <alternativeName>
        <fullName evidence="1">16S rRNA dimethyladenosine transferase</fullName>
    </alternativeName>
    <alternativeName>
        <fullName evidence="1">16S rRNA dimethylase</fullName>
    </alternativeName>
    <alternativeName>
        <fullName evidence="1">S-adenosylmethionine-6-N', N'-adenosyl(rRNA) dimethyltransferase</fullName>
    </alternativeName>
</protein>
<keyword id="KW-0963">Cytoplasm</keyword>
<keyword id="KW-0489">Methyltransferase</keyword>
<keyword id="KW-1185">Reference proteome</keyword>
<keyword id="KW-0694">RNA-binding</keyword>
<keyword id="KW-0698">rRNA processing</keyword>
<keyword id="KW-0949">S-adenosyl-L-methionine</keyword>
<keyword id="KW-0808">Transferase</keyword>
<gene>
    <name evidence="1" type="primary">rsmA</name>
    <name evidence="1" type="synonym">ksgA</name>
    <name type="ordered locus">Syncc9902_1283</name>
</gene>
<name>RSMA_SYNS9</name>
<dbReference type="EC" id="2.1.1.182" evidence="1"/>
<dbReference type="EMBL" id="CP000097">
    <property type="protein sequence ID" value="ABB26247.1"/>
    <property type="molecule type" value="Genomic_DNA"/>
</dbReference>
<dbReference type="RefSeq" id="WP_011360072.1">
    <property type="nucleotide sequence ID" value="NC_007513.1"/>
</dbReference>
<dbReference type="SMR" id="Q3AXF3"/>
<dbReference type="STRING" id="316279.Syncc9902_1283"/>
<dbReference type="KEGG" id="sye:Syncc9902_1283"/>
<dbReference type="eggNOG" id="COG0030">
    <property type="taxonomic scope" value="Bacteria"/>
</dbReference>
<dbReference type="HOGENOM" id="CLU_041220_0_1_3"/>
<dbReference type="OrthoDB" id="9814755at2"/>
<dbReference type="Proteomes" id="UP000002712">
    <property type="component" value="Chromosome"/>
</dbReference>
<dbReference type="GO" id="GO:0005829">
    <property type="term" value="C:cytosol"/>
    <property type="evidence" value="ECO:0007669"/>
    <property type="project" value="TreeGrafter"/>
</dbReference>
<dbReference type="GO" id="GO:0052908">
    <property type="term" value="F:16S rRNA (adenine(1518)-N(6)/adenine(1519)-N(6))-dimethyltransferase activity"/>
    <property type="evidence" value="ECO:0007669"/>
    <property type="project" value="UniProtKB-EC"/>
</dbReference>
<dbReference type="GO" id="GO:0003723">
    <property type="term" value="F:RNA binding"/>
    <property type="evidence" value="ECO:0007669"/>
    <property type="project" value="UniProtKB-KW"/>
</dbReference>
<dbReference type="CDD" id="cd02440">
    <property type="entry name" value="AdoMet_MTases"/>
    <property type="match status" value="1"/>
</dbReference>
<dbReference type="Gene3D" id="1.10.8.100">
    <property type="entry name" value="Ribosomal RNA adenine dimethylase-like, domain 2"/>
    <property type="match status" value="1"/>
</dbReference>
<dbReference type="Gene3D" id="3.40.50.150">
    <property type="entry name" value="Vaccinia Virus protein VP39"/>
    <property type="match status" value="1"/>
</dbReference>
<dbReference type="HAMAP" id="MF_00607">
    <property type="entry name" value="16SrRNA_methyltr_A"/>
    <property type="match status" value="1"/>
</dbReference>
<dbReference type="InterPro" id="IPR001737">
    <property type="entry name" value="KsgA/Erm"/>
</dbReference>
<dbReference type="InterPro" id="IPR023165">
    <property type="entry name" value="rRNA_Ade_diMease-like_C"/>
</dbReference>
<dbReference type="InterPro" id="IPR020596">
    <property type="entry name" value="rRNA_Ade_Mease_Trfase_CS"/>
</dbReference>
<dbReference type="InterPro" id="IPR020598">
    <property type="entry name" value="rRNA_Ade_methylase_Trfase_N"/>
</dbReference>
<dbReference type="InterPro" id="IPR011530">
    <property type="entry name" value="rRNA_adenine_dimethylase"/>
</dbReference>
<dbReference type="InterPro" id="IPR029063">
    <property type="entry name" value="SAM-dependent_MTases_sf"/>
</dbReference>
<dbReference type="NCBIfam" id="TIGR00755">
    <property type="entry name" value="ksgA"/>
    <property type="match status" value="1"/>
</dbReference>
<dbReference type="PANTHER" id="PTHR11727">
    <property type="entry name" value="DIMETHYLADENOSINE TRANSFERASE"/>
    <property type="match status" value="1"/>
</dbReference>
<dbReference type="PANTHER" id="PTHR11727:SF7">
    <property type="entry name" value="DIMETHYLADENOSINE TRANSFERASE-RELATED"/>
    <property type="match status" value="1"/>
</dbReference>
<dbReference type="Pfam" id="PF00398">
    <property type="entry name" value="RrnaAD"/>
    <property type="match status" value="1"/>
</dbReference>
<dbReference type="SMART" id="SM00650">
    <property type="entry name" value="rADc"/>
    <property type="match status" value="1"/>
</dbReference>
<dbReference type="SUPFAM" id="SSF53335">
    <property type="entry name" value="S-adenosyl-L-methionine-dependent methyltransferases"/>
    <property type="match status" value="1"/>
</dbReference>
<dbReference type="PROSITE" id="PS01131">
    <property type="entry name" value="RRNA_A_DIMETH"/>
    <property type="match status" value="1"/>
</dbReference>
<dbReference type="PROSITE" id="PS51689">
    <property type="entry name" value="SAM_RNA_A_N6_MT"/>
    <property type="match status" value="1"/>
</dbReference>
<sequence length="274" mass="30310">MSFSGHTARKRFGQHWLRDARVLDQIVEAARLQQDDCVLEVGPGRGALTERLLASPAAQIHAIELDRDLVRGLHDRFGSESRFSLREGDVLEAPLHLVDGGFANKVVANIPYNITGPLLARLIGRLDRPVEPTYDCLVLLLQKEVAERIRAKPGRSSFSALSVRMQLLADCSLVCPVPPRCFQPPPKVQSEVILLKPFPPERRLPIDLASRVEALLKQAFQARRKMLRNTLAGVIDPQVLEPLAASVGISLQQRPQEVAAEAWVALARGLNQDV</sequence>
<evidence type="ECO:0000255" key="1">
    <source>
        <dbReference type="HAMAP-Rule" id="MF_00607"/>
    </source>
</evidence>
<proteinExistence type="inferred from homology"/>
<reference key="1">
    <citation type="submission" date="2005-08" db="EMBL/GenBank/DDBJ databases">
        <title>Complete sequence of Synechococcus sp. CC9902.</title>
        <authorList>
            <person name="Copeland A."/>
            <person name="Lucas S."/>
            <person name="Lapidus A."/>
            <person name="Barry K."/>
            <person name="Detter J.C."/>
            <person name="Glavina T."/>
            <person name="Hammon N."/>
            <person name="Israni S."/>
            <person name="Pitluck S."/>
            <person name="Martinez M."/>
            <person name="Schmutz J."/>
            <person name="Larimer F."/>
            <person name="Land M."/>
            <person name="Kyrpides N."/>
            <person name="Ivanova N."/>
            <person name="Richardson P."/>
        </authorList>
    </citation>
    <scope>NUCLEOTIDE SEQUENCE [LARGE SCALE GENOMIC DNA]</scope>
    <source>
        <strain>CC9902</strain>
    </source>
</reference>
<organism>
    <name type="scientific">Synechococcus sp. (strain CC9902)</name>
    <dbReference type="NCBI Taxonomy" id="316279"/>
    <lineage>
        <taxon>Bacteria</taxon>
        <taxon>Bacillati</taxon>
        <taxon>Cyanobacteriota</taxon>
        <taxon>Cyanophyceae</taxon>
        <taxon>Synechococcales</taxon>
        <taxon>Synechococcaceae</taxon>
        <taxon>Synechococcus</taxon>
    </lineage>
</organism>